<proteinExistence type="inferred from homology"/>
<comment type="function">
    <text evidence="1">Catalyzes the specific phosphorylation of 1,6-anhydro-N-acetylmuramic acid (anhMurNAc) with the simultaneous cleavage of the 1,6-anhydro ring, generating MurNAc-6-P. Is required for the utilization of anhMurNAc either imported from the medium or derived from its own cell wall murein, and thus plays a role in cell wall recycling.</text>
</comment>
<comment type="catalytic activity">
    <reaction evidence="1">
        <text>1,6-anhydro-N-acetyl-beta-muramate + ATP + H2O = N-acetyl-D-muramate 6-phosphate + ADP + H(+)</text>
        <dbReference type="Rhea" id="RHEA:24952"/>
        <dbReference type="ChEBI" id="CHEBI:15377"/>
        <dbReference type="ChEBI" id="CHEBI:15378"/>
        <dbReference type="ChEBI" id="CHEBI:30616"/>
        <dbReference type="ChEBI" id="CHEBI:58690"/>
        <dbReference type="ChEBI" id="CHEBI:58722"/>
        <dbReference type="ChEBI" id="CHEBI:456216"/>
        <dbReference type="EC" id="2.7.1.170"/>
    </reaction>
</comment>
<comment type="pathway">
    <text evidence="1">Amino-sugar metabolism; 1,6-anhydro-N-acetylmuramate degradation.</text>
</comment>
<comment type="pathway">
    <text evidence="1">Cell wall biogenesis; peptidoglycan recycling.</text>
</comment>
<comment type="similarity">
    <text evidence="1">Belongs to the anhydro-N-acetylmuramic acid kinase family.</text>
</comment>
<sequence length="387" mass="40547">MQTGHPADGVYFGLMSGTSMDGVDGVAVRFEAGKPPAVLSEAFVGFADTLRDALFALQQPGDDEIEREALAANALAARYAVCCHELLRTAGLSPDDVRALGVHGQTVRHRPERGYTRQLNNAALLAELTRIDVIADFRSRDVAAGGQGAPLVPAFHATVFGSPDETRVVCNLGGISNITILPAGGGPQGEGHARNDTVRGHDCGPANALIDAWVERHLKQPFDDGGRFAARGTVDETLLAALLDEPYFRQNAPKSTGRDLFNADWLDAKLAGFQHLAPENVQATLTALTAATVADEIARHAGDCRAVYVCGGGARNPVLLDALATALAARGLDAAVATTAALGVPPQQVESLAFAWLAYRFNARAPGNVSTVTGAAGERVLGALYPR</sequence>
<gene>
    <name evidence="1" type="primary">anmK</name>
    <name type="ordered locus">BURPS1710b_3415</name>
</gene>
<feature type="chain" id="PRO_0000249987" description="Anhydro-N-acetylmuramic acid kinase">
    <location>
        <begin position="1"/>
        <end position="387"/>
    </location>
</feature>
<feature type="binding site" evidence="1">
    <location>
        <begin position="17"/>
        <end position="24"/>
    </location>
    <ligand>
        <name>ATP</name>
        <dbReference type="ChEBI" id="CHEBI:30616"/>
    </ligand>
</feature>
<reference key="1">
    <citation type="journal article" date="2010" name="Genome Biol. Evol.">
        <title>Continuing evolution of Burkholderia mallei through genome reduction and large-scale rearrangements.</title>
        <authorList>
            <person name="Losada L."/>
            <person name="Ronning C.M."/>
            <person name="DeShazer D."/>
            <person name="Woods D."/>
            <person name="Fedorova N."/>
            <person name="Kim H.S."/>
            <person name="Shabalina S.A."/>
            <person name="Pearson T.R."/>
            <person name="Brinkac L."/>
            <person name="Tan P."/>
            <person name="Nandi T."/>
            <person name="Crabtree J."/>
            <person name="Badger J."/>
            <person name="Beckstrom-Sternberg S."/>
            <person name="Saqib M."/>
            <person name="Schutzer S.E."/>
            <person name="Keim P."/>
            <person name="Nierman W.C."/>
        </authorList>
    </citation>
    <scope>NUCLEOTIDE SEQUENCE [LARGE SCALE GENOMIC DNA]</scope>
    <source>
        <strain>1710b</strain>
    </source>
</reference>
<organism>
    <name type="scientific">Burkholderia pseudomallei (strain 1710b)</name>
    <dbReference type="NCBI Taxonomy" id="320372"/>
    <lineage>
        <taxon>Bacteria</taxon>
        <taxon>Pseudomonadati</taxon>
        <taxon>Pseudomonadota</taxon>
        <taxon>Betaproteobacteria</taxon>
        <taxon>Burkholderiales</taxon>
        <taxon>Burkholderiaceae</taxon>
        <taxon>Burkholderia</taxon>
        <taxon>pseudomallei group</taxon>
    </lineage>
</organism>
<evidence type="ECO:0000255" key="1">
    <source>
        <dbReference type="HAMAP-Rule" id="MF_01270"/>
    </source>
</evidence>
<protein>
    <recommendedName>
        <fullName evidence="1">Anhydro-N-acetylmuramic acid kinase</fullName>
        <ecNumber evidence="1">2.7.1.170</ecNumber>
    </recommendedName>
    <alternativeName>
        <fullName evidence="1">AnhMurNAc kinase</fullName>
    </alternativeName>
</protein>
<name>ANMK_BURP1</name>
<accession>Q3JNR7</accession>
<keyword id="KW-0067">ATP-binding</keyword>
<keyword id="KW-0119">Carbohydrate metabolism</keyword>
<keyword id="KW-0418">Kinase</keyword>
<keyword id="KW-0547">Nucleotide-binding</keyword>
<keyword id="KW-0808">Transferase</keyword>
<dbReference type="EC" id="2.7.1.170" evidence="1"/>
<dbReference type="EMBL" id="CP000124">
    <property type="protein sequence ID" value="ABA47575.1"/>
    <property type="molecule type" value="Genomic_DNA"/>
</dbReference>
<dbReference type="RefSeq" id="WP_004527729.1">
    <property type="nucleotide sequence ID" value="NC_007434.1"/>
</dbReference>
<dbReference type="SMR" id="Q3JNR7"/>
<dbReference type="EnsemblBacteria" id="ABA47575">
    <property type="protein sequence ID" value="ABA47575"/>
    <property type="gene ID" value="BURPS1710b_3415"/>
</dbReference>
<dbReference type="KEGG" id="bpm:BURPS1710b_3415"/>
<dbReference type="HOGENOM" id="CLU_038782_0_0_4"/>
<dbReference type="UniPathway" id="UPA00343"/>
<dbReference type="UniPathway" id="UPA00544"/>
<dbReference type="Proteomes" id="UP000002700">
    <property type="component" value="Chromosome I"/>
</dbReference>
<dbReference type="GO" id="GO:0005524">
    <property type="term" value="F:ATP binding"/>
    <property type="evidence" value="ECO:0007669"/>
    <property type="project" value="UniProtKB-UniRule"/>
</dbReference>
<dbReference type="GO" id="GO:0016301">
    <property type="term" value="F:kinase activity"/>
    <property type="evidence" value="ECO:0007669"/>
    <property type="project" value="UniProtKB-KW"/>
</dbReference>
<dbReference type="GO" id="GO:0016773">
    <property type="term" value="F:phosphotransferase activity, alcohol group as acceptor"/>
    <property type="evidence" value="ECO:0007669"/>
    <property type="project" value="UniProtKB-UniRule"/>
</dbReference>
<dbReference type="GO" id="GO:0097175">
    <property type="term" value="P:1,6-anhydro-N-acetyl-beta-muramic acid catabolic process"/>
    <property type="evidence" value="ECO:0007669"/>
    <property type="project" value="UniProtKB-UniRule"/>
</dbReference>
<dbReference type="GO" id="GO:0006040">
    <property type="term" value="P:amino sugar metabolic process"/>
    <property type="evidence" value="ECO:0007669"/>
    <property type="project" value="InterPro"/>
</dbReference>
<dbReference type="GO" id="GO:0009254">
    <property type="term" value="P:peptidoglycan turnover"/>
    <property type="evidence" value="ECO:0007669"/>
    <property type="project" value="UniProtKB-UniRule"/>
</dbReference>
<dbReference type="Gene3D" id="3.30.420.40">
    <property type="match status" value="2"/>
</dbReference>
<dbReference type="HAMAP" id="MF_01270">
    <property type="entry name" value="AnhMurNAc_kinase"/>
    <property type="match status" value="1"/>
</dbReference>
<dbReference type="InterPro" id="IPR005338">
    <property type="entry name" value="Anhydro_N_Ac-Mur_kinase"/>
</dbReference>
<dbReference type="InterPro" id="IPR043129">
    <property type="entry name" value="ATPase_NBD"/>
</dbReference>
<dbReference type="NCBIfam" id="NF007139">
    <property type="entry name" value="PRK09585.1-3"/>
    <property type="match status" value="1"/>
</dbReference>
<dbReference type="NCBIfam" id="NF007140">
    <property type="entry name" value="PRK09585.1-4"/>
    <property type="match status" value="1"/>
</dbReference>
<dbReference type="PANTHER" id="PTHR30605">
    <property type="entry name" value="ANHYDRO-N-ACETYLMURAMIC ACID KINASE"/>
    <property type="match status" value="1"/>
</dbReference>
<dbReference type="PANTHER" id="PTHR30605:SF0">
    <property type="entry name" value="ANHYDRO-N-ACETYLMURAMIC ACID KINASE"/>
    <property type="match status" value="1"/>
</dbReference>
<dbReference type="Pfam" id="PF03702">
    <property type="entry name" value="AnmK"/>
    <property type="match status" value="1"/>
</dbReference>
<dbReference type="SUPFAM" id="SSF53067">
    <property type="entry name" value="Actin-like ATPase domain"/>
    <property type="match status" value="1"/>
</dbReference>